<name>SYPM_MOUSE</name>
<proteinExistence type="evidence at protein level"/>
<evidence type="ECO:0000250" key="1">
    <source>
        <dbReference type="UniProtKB" id="Q7L3T8"/>
    </source>
</evidence>
<evidence type="ECO:0000255" key="2"/>
<evidence type="ECO:0000305" key="3"/>
<organism>
    <name type="scientific">Mus musculus</name>
    <name type="common">Mouse</name>
    <dbReference type="NCBI Taxonomy" id="10090"/>
    <lineage>
        <taxon>Eukaryota</taxon>
        <taxon>Metazoa</taxon>
        <taxon>Chordata</taxon>
        <taxon>Craniata</taxon>
        <taxon>Vertebrata</taxon>
        <taxon>Euteleostomi</taxon>
        <taxon>Mammalia</taxon>
        <taxon>Eutheria</taxon>
        <taxon>Euarchontoglires</taxon>
        <taxon>Glires</taxon>
        <taxon>Rodentia</taxon>
        <taxon>Myomorpha</taxon>
        <taxon>Muroidea</taxon>
        <taxon>Muridae</taxon>
        <taxon>Murinae</taxon>
        <taxon>Mus</taxon>
        <taxon>Mus</taxon>
    </lineage>
</organism>
<accession>Q8CFI5</accession>
<accession>A2AVQ8</accession>
<accession>Q8R0C4</accession>
<protein>
    <recommendedName>
        <fullName>Probable proline--tRNA ligase, mitochondrial</fullName>
        <ecNumber evidence="1">6.1.1.15</ecNumber>
    </recommendedName>
    <alternativeName>
        <fullName>Prolyl-tRNA synthetase</fullName>
        <shortName>ProRS</shortName>
    </alternativeName>
</protein>
<gene>
    <name type="primary">Pars2</name>
</gene>
<keyword id="KW-0030">Aminoacyl-tRNA synthetase</keyword>
<keyword id="KW-0067">ATP-binding</keyword>
<keyword id="KW-0436">Ligase</keyword>
<keyword id="KW-0496">Mitochondrion</keyword>
<keyword id="KW-0547">Nucleotide-binding</keyword>
<keyword id="KW-0648">Protein biosynthesis</keyword>
<keyword id="KW-1185">Reference proteome</keyword>
<keyword id="KW-0809">Transit peptide</keyword>
<reference key="1">
    <citation type="journal article" date="2009" name="PLoS Biol.">
        <title>Lineage-specific biology revealed by a finished genome assembly of the mouse.</title>
        <authorList>
            <person name="Church D.M."/>
            <person name="Goodstadt L."/>
            <person name="Hillier L.W."/>
            <person name="Zody M.C."/>
            <person name="Goldstein S."/>
            <person name="She X."/>
            <person name="Bult C.J."/>
            <person name="Agarwala R."/>
            <person name="Cherry J.L."/>
            <person name="DiCuccio M."/>
            <person name="Hlavina W."/>
            <person name="Kapustin Y."/>
            <person name="Meric P."/>
            <person name="Maglott D."/>
            <person name="Birtle Z."/>
            <person name="Marques A.C."/>
            <person name="Graves T."/>
            <person name="Zhou S."/>
            <person name="Teague B."/>
            <person name="Potamousis K."/>
            <person name="Churas C."/>
            <person name="Place M."/>
            <person name="Herschleb J."/>
            <person name="Runnheim R."/>
            <person name="Forrest D."/>
            <person name="Amos-Landgraf J."/>
            <person name="Schwartz D.C."/>
            <person name="Cheng Z."/>
            <person name="Lindblad-Toh K."/>
            <person name="Eichler E.E."/>
            <person name="Ponting C.P."/>
        </authorList>
    </citation>
    <scope>NUCLEOTIDE SEQUENCE [LARGE SCALE GENOMIC DNA]</scope>
    <source>
        <strain>C57BL/6J</strain>
    </source>
</reference>
<reference key="2">
    <citation type="journal article" date="2004" name="Genome Res.">
        <title>The status, quality, and expansion of the NIH full-length cDNA project: the Mammalian Gene Collection (MGC).</title>
        <authorList>
            <consortium name="The MGC Project Team"/>
        </authorList>
    </citation>
    <scope>NUCLEOTIDE SEQUENCE [LARGE SCALE MRNA]</scope>
    <source>
        <strain>NMRI</strain>
        <tissue>Eye</tissue>
        <tissue>Mammary tumor</tissue>
    </source>
</reference>
<reference key="3">
    <citation type="journal article" date="2010" name="Cell">
        <title>A tissue-specific atlas of mouse protein phosphorylation and expression.</title>
        <authorList>
            <person name="Huttlin E.L."/>
            <person name="Jedrychowski M.P."/>
            <person name="Elias J.E."/>
            <person name="Goswami T."/>
            <person name="Rad R."/>
            <person name="Beausoleil S.A."/>
            <person name="Villen J."/>
            <person name="Haas W."/>
            <person name="Sowa M.E."/>
            <person name="Gygi S.P."/>
        </authorList>
    </citation>
    <scope>IDENTIFICATION BY MASS SPECTROMETRY [LARGE SCALE ANALYSIS]</scope>
    <source>
        <tissue>Brain</tissue>
        <tissue>Heart</tissue>
        <tissue>Liver</tissue>
        <tissue>Spleen</tissue>
    </source>
</reference>
<sequence>MEGLLTRCRTLSALAACSLRHCRYIIHKCYHRAPGRGQRLVLSRMFQPQNLREDQVLSLEGRASDLTCKSQRLMLQVGLILPASPGCYHLMPYTVRAVEKLVRVIDQEMQAIGGQKINMPSLSPAELWRATSRWDLMGRELLRLRDRHGKEYCLGPTHEEAVTALVASQKKLSYKQLPLLLYQVTRKFRDEPRPRFGLLRGREFYMKDMYTFDSSSEAAQETYGLVCDAYCRLFDRLGLQWMKARADVGSIGGTMSHEFQLPVDIGEDRLVVCPSCHFSANTEILDLSQKICPDCQGPLTETKGIEVGHTFYLSTKYSSIFNALFTNAHGESLLAEMGCYGLGVTRILAAAIEVLSTEDCIRWPRLLAPYQVCVIPPKKGSKETAATEIVEKLYDDIMEAVPQLRGEVLLDDRTHLTIGNRLKDANKLGYPFVIIAGKRALEDPAHFEVWSQNTGEVVFLTKEGVMELLTGVHVV</sequence>
<dbReference type="EC" id="6.1.1.15" evidence="1"/>
<dbReference type="EMBL" id="AL929585">
    <property type="status" value="NOT_ANNOTATED_CDS"/>
    <property type="molecule type" value="Genomic_DNA"/>
</dbReference>
<dbReference type="EMBL" id="BC027073">
    <property type="protein sequence ID" value="AAH27073.1"/>
    <property type="molecule type" value="mRNA"/>
</dbReference>
<dbReference type="EMBL" id="BC038817">
    <property type="protein sequence ID" value="AAH38817.1"/>
    <property type="molecule type" value="mRNA"/>
</dbReference>
<dbReference type="CCDS" id="CCDS18423.1"/>
<dbReference type="RefSeq" id="NP_001272713.1">
    <property type="nucleotide sequence ID" value="NM_001285784.1"/>
</dbReference>
<dbReference type="RefSeq" id="NP_758476.2">
    <property type="nucleotide sequence ID" value="NM_172272.2"/>
</dbReference>
<dbReference type="SMR" id="Q8CFI5"/>
<dbReference type="BioGRID" id="230971">
    <property type="interactions" value="9"/>
</dbReference>
<dbReference type="FunCoup" id="Q8CFI5">
    <property type="interactions" value="1576"/>
</dbReference>
<dbReference type="STRING" id="10090.ENSMUSP00000102393"/>
<dbReference type="iPTMnet" id="Q8CFI5"/>
<dbReference type="PhosphoSitePlus" id="Q8CFI5"/>
<dbReference type="PaxDb" id="10090-ENSMUSP00000102393"/>
<dbReference type="ProteomicsDB" id="254744"/>
<dbReference type="Pumba" id="Q8CFI5"/>
<dbReference type="Antibodypedia" id="33219">
    <property type="antibodies" value="61 antibodies from 20 providers"/>
</dbReference>
<dbReference type="DNASU" id="230577"/>
<dbReference type="Ensembl" id="ENSMUST00000058905.8">
    <property type="protein sequence ID" value="ENSMUSP00000053160.8"/>
    <property type="gene ID" value="ENSMUSG00000043572.8"/>
</dbReference>
<dbReference type="GeneID" id="230577"/>
<dbReference type="KEGG" id="mmu:230577"/>
<dbReference type="UCSC" id="uc008typ.1">
    <property type="organism name" value="mouse"/>
</dbReference>
<dbReference type="AGR" id="MGI:2386296"/>
<dbReference type="CTD" id="25973"/>
<dbReference type="MGI" id="MGI:2386296">
    <property type="gene designation" value="Pars2"/>
</dbReference>
<dbReference type="VEuPathDB" id="HostDB:ENSMUSG00000043572"/>
<dbReference type="eggNOG" id="KOG2324">
    <property type="taxonomic scope" value="Eukaryota"/>
</dbReference>
<dbReference type="GeneTree" id="ENSGT00390000010922"/>
<dbReference type="HOGENOM" id="CLU_016739_4_1_1"/>
<dbReference type="InParanoid" id="Q8CFI5"/>
<dbReference type="OrthoDB" id="10267474at2759"/>
<dbReference type="BioGRID-ORCS" id="230577">
    <property type="hits" value="28 hits in 84 CRISPR screens"/>
</dbReference>
<dbReference type="PRO" id="PR:Q8CFI5"/>
<dbReference type="Proteomes" id="UP000000589">
    <property type="component" value="Chromosome 4"/>
</dbReference>
<dbReference type="RNAct" id="Q8CFI5">
    <property type="molecule type" value="protein"/>
</dbReference>
<dbReference type="Bgee" id="ENSMUSG00000043572">
    <property type="expression patterns" value="Expressed in cortical plate and 189 other cell types or tissues"/>
</dbReference>
<dbReference type="ExpressionAtlas" id="Q8CFI5">
    <property type="expression patterns" value="baseline and differential"/>
</dbReference>
<dbReference type="GO" id="GO:0005759">
    <property type="term" value="C:mitochondrial matrix"/>
    <property type="evidence" value="ECO:0007669"/>
    <property type="project" value="UniProtKB-SubCell"/>
</dbReference>
<dbReference type="GO" id="GO:0005739">
    <property type="term" value="C:mitochondrion"/>
    <property type="evidence" value="ECO:0007005"/>
    <property type="project" value="MGI"/>
</dbReference>
<dbReference type="GO" id="GO:0005524">
    <property type="term" value="F:ATP binding"/>
    <property type="evidence" value="ECO:0007669"/>
    <property type="project" value="UniProtKB-KW"/>
</dbReference>
<dbReference type="GO" id="GO:0004827">
    <property type="term" value="F:proline-tRNA ligase activity"/>
    <property type="evidence" value="ECO:0007669"/>
    <property type="project" value="UniProtKB-EC"/>
</dbReference>
<dbReference type="GO" id="GO:0006433">
    <property type="term" value="P:prolyl-tRNA aminoacylation"/>
    <property type="evidence" value="ECO:0007669"/>
    <property type="project" value="InterPro"/>
</dbReference>
<dbReference type="CDD" id="cd00861">
    <property type="entry name" value="ProRS_anticodon_short"/>
    <property type="match status" value="1"/>
</dbReference>
<dbReference type="CDD" id="cd00779">
    <property type="entry name" value="ProRS_core_prok"/>
    <property type="match status" value="1"/>
</dbReference>
<dbReference type="FunFam" id="3.40.50.800:FF:000020">
    <property type="entry name" value="Probable proline--tRNA ligase, mitochondrial"/>
    <property type="match status" value="1"/>
</dbReference>
<dbReference type="FunFam" id="3.30.930.10:FF:000042">
    <property type="entry name" value="probable proline--tRNA ligase, mitochondrial"/>
    <property type="match status" value="1"/>
</dbReference>
<dbReference type="Gene3D" id="3.40.50.800">
    <property type="entry name" value="Anticodon-binding domain"/>
    <property type="match status" value="1"/>
</dbReference>
<dbReference type="Gene3D" id="3.30.930.10">
    <property type="entry name" value="Bira Bifunctional Protein, Domain 2"/>
    <property type="match status" value="1"/>
</dbReference>
<dbReference type="InterPro" id="IPR002314">
    <property type="entry name" value="aa-tRNA-synt_IIb"/>
</dbReference>
<dbReference type="InterPro" id="IPR006195">
    <property type="entry name" value="aa-tRNA-synth_II"/>
</dbReference>
<dbReference type="InterPro" id="IPR045864">
    <property type="entry name" value="aa-tRNA-synth_II/BPL/LPL"/>
</dbReference>
<dbReference type="InterPro" id="IPR004154">
    <property type="entry name" value="Anticodon-bd"/>
</dbReference>
<dbReference type="InterPro" id="IPR036621">
    <property type="entry name" value="Anticodon-bd_dom_sf"/>
</dbReference>
<dbReference type="InterPro" id="IPR002316">
    <property type="entry name" value="Pro-tRNA-ligase_IIa"/>
</dbReference>
<dbReference type="InterPro" id="IPR050062">
    <property type="entry name" value="Pro-tRNA_synthetase"/>
</dbReference>
<dbReference type="InterPro" id="IPR044140">
    <property type="entry name" value="ProRS_anticodon_short"/>
</dbReference>
<dbReference type="InterPro" id="IPR033730">
    <property type="entry name" value="ProRS_core_prok"/>
</dbReference>
<dbReference type="PANTHER" id="PTHR42753">
    <property type="entry name" value="MITOCHONDRIAL RIBOSOME PROTEIN L39/PROLYL-TRNA LIGASE FAMILY MEMBER"/>
    <property type="match status" value="1"/>
</dbReference>
<dbReference type="PANTHER" id="PTHR42753:SF10">
    <property type="entry name" value="PROLINE--TRNA LIGASE, MITOCHONDRIAL-RELATED"/>
    <property type="match status" value="1"/>
</dbReference>
<dbReference type="Pfam" id="PF03129">
    <property type="entry name" value="HGTP_anticodon"/>
    <property type="match status" value="1"/>
</dbReference>
<dbReference type="Pfam" id="PF00587">
    <property type="entry name" value="tRNA-synt_2b"/>
    <property type="match status" value="1"/>
</dbReference>
<dbReference type="PRINTS" id="PR01046">
    <property type="entry name" value="TRNASYNTHPRO"/>
</dbReference>
<dbReference type="SUPFAM" id="SSF52954">
    <property type="entry name" value="Class II aaRS ABD-related"/>
    <property type="match status" value="1"/>
</dbReference>
<dbReference type="SUPFAM" id="SSF55681">
    <property type="entry name" value="Class II aaRS and biotin synthetases"/>
    <property type="match status" value="1"/>
</dbReference>
<dbReference type="PROSITE" id="PS50862">
    <property type="entry name" value="AA_TRNA_LIGASE_II"/>
    <property type="match status" value="1"/>
</dbReference>
<comment type="function">
    <text evidence="1">Mitochondrial aminoacyl-tRNA synthetase that catalyzes the specific attachment of the proline amino acid (aa) to the homologous transfer RNA (tRNA), further participating in protein synthesis. The reaction occurs in a two steps: proline is first activated by ATP to form Pro-AMP and then transferred to the acceptor end of tRNA(Pro).</text>
</comment>
<comment type="catalytic activity">
    <reaction evidence="1">
        <text>tRNA(Pro) + L-proline + ATP = L-prolyl-tRNA(Pro) + AMP + diphosphate</text>
        <dbReference type="Rhea" id="RHEA:14305"/>
        <dbReference type="Rhea" id="RHEA-COMP:9700"/>
        <dbReference type="Rhea" id="RHEA-COMP:9702"/>
        <dbReference type="ChEBI" id="CHEBI:30616"/>
        <dbReference type="ChEBI" id="CHEBI:33019"/>
        <dbReference type="ChEBI" id="CHEBI:60039"/>
        <dbReference type="ChEBI" id="CHEBI:78442"/>
        <dbReference type="ChEBI" id="CHEBI:78532"/>
        <dbReference type="ChEBI" id="CHEBI:456215"/>
        <dbReference type="EC" id="6.1.1.15"/>
    </reaction>
</comment>
<comment type="subcellular location">
    <subcellularLocation>
        <location evidence="1">Mitochondrion matrix</location>
    </subcellularLocation>
</comment>
<comment type="similarity">
    <text evidence="3">Belongs to the class-II aminoacyl-tRNA synthetase family.</text>
</comment>
<feature type="transit peptide" description="Mitochondrion" evidence="2">
    <location>
        <begin position="1"/>
        <end position="29"/>
    </location>
</feature>
<feature type="chain" id="PRO_0000035819" description="Probable proline--tRNA ligase, mitochondrial">
    <location>
        <begin position="30"/>
        <end position="475"/>
    </location>
</feature>
<feature type="sequence conflict" description="In Ref. 2; AAH38817." evidence="3" ref="2">
    <original>Q</original>
    <variation>R</variation>
    <location>
        <position position="240"/>
    </location>
</feature>
<feature type="sequence conflict" description="In Ref. 2; AAH38817." evidence="3" ref="2">
    <original>S</original>
    <variation>G</variation>
    <location>
        <position position="314"/>
    </location>
</feature>
<feature type="sequence conflict" description="In Ref. 2; AAH38817." evidence="3" ref="2">
    <original>I</original>
    <variation>V</variation>
    <location>
        <position position="397"/>
    </location>
</feature>